<name>Y597_METJA</name>
<keyword id="KW-0004">4Fe-4S</keyword>
<keyword id="KW-0408">Iron</keyword>
<keyword id="KW-0411">Iron-sulfur</keyword>
<keyword id="KW-0479">Metal-binding</keyword>
<keyword id="KW-1185">Reference proteome</keyword>
<keyword id="KW-0949">S-adenosyl-L-methionine</keyword>
<proteinExistence type="predicted"/>
<gene>
    <name type="ordered locus">MJ0597</name>
</gene>
<feature type="chain" id="PRO_0000106950" description="Uncharacterized protein MJ0597">
    <location>
        <begin position="1"/>
        <end position="357"/>
    </location>
</feature>
<feature type="domain" description="Radical SAM core" evidence="1">
    <location>
        <begin position="27"/>
        <end position="242"/>
    </location>
</feature>
<feature type="binding site" evidence="1">
    <location>
        <position position="44"/>
    </location>
    <ligand>
        <name>[4Fe-4S] cluster</name>
        <dbReference type="ChEBI" id="CHEBI:49883"/>
        <note>4Fe-4S-S-AdoMet</note>
    </ligand>
</feature>
<feature type="binding site" evidence="1">
    <location>
        <position position="50"/>
    </location>
    <ligand>
        <name>[4Fe-4S] cluster</name>
        <dbReference type="ChEBI" id="CHEBI:49883"/>
        <note>4Fe-4S-S-AdoMet</note>
    </ligand>
</feature>
<feature type="binding site" evidence="1">
    <location>
        <position position="53"/>
    </location>
    <ligand>
        <name>[4Fe-4S] cluster</name>
        <dbReference type="ChEBI" id="CHEBI:49883"/>
        <note>4Fe-4S-S-AdoMet</note>
    </ligand>
</feature>
<sequence length="357" mass="40900">MTIGREKMKVEEILENARKAFKLTTKHFGNTVTFERALFLGWYCNLKQPCKFCYMATQKNKIKDPRKARRRLESVLAEAILMKRIGWKLEFISGGYGYTPKEINDIAEMVAYVQKCRQYLNVGVIDLDNINLDVIEGVVGAVETVSKDRDWICPGKPLDKIKDNLLKAKELGLKTGITIILGLGEKEEDIEKLLNLIEELDLNRITFYSLNPQKGTIYENKPSVTTIEYMNWVSSVRLNFPKIKIITGVWVDKIPMISPLIMSGSNVITKFPLFSVFGTKEAHWIEKEILATGRELLGTFTDIDILAGKKVLEKTPYIEEEINISSENIKRVEELRENINERIESYVSKVLRKIKAS</sequence>
<dbReference type="EMBL" id="L77117">
    <property type="protein sequence ID" value="AAB98589.1"/>
    <property type="molecule type" value="Genomic_DNA"/>
</dbReference>
<dbReference type="PIR" id="E64374">
    <property type="entry name" value="E64374"/>
</dbReference>
<dbReference type="FunCoup" id="Q58014">
    <property type="interactions" value="2"/>
</dbReference>
<dbReference type="STRING" id="243232.MJ_0597"/>
<dbReference type="PaxDb" id="243232-MJ_0597"/>
<dbReference type="EnsemblBacteria" id="AAB98589">
    <property type="protein sequence ID" value="AAB98589"/>
    <property type="gene ID" value="MJ_0597"/>
</dbReference>
<dbReference type="KEGG" id="mja:MJ_0597"/>
<dbReference type="eggNOG" id="arCOG00659">
    <property type="taxonomic scope" value="Archaea"/>
</dbReference>
<dbReference type="HOGENOM" id="CLU_833177_0_0_2"/>
<dbReference type="InParanoid" id="Q58014"/>
<dbReference type="PhylomeDB" id="Q58014"/>
<dbReference type="Proteomes" id="UP000000805">
    <property type="component" value="Chromosome"/>
</dbReference>
<dbReference type="GO" id="GO:0051537">
    <property type="term" value="F:2 iron, 2 sulfur cluster binding"/>
    <property type="evidence" value="ECO:0000318"/>
    <property type="project" value="GO_Central"/>
</dbReference>
<dbReference type="GO" id="GO:0051539">
    <property type="term" value="F:4 iron, 4 sulfur cluster binding"/>
    <property type="evidence" value="ECO:0007669"/>
    <property type="project" value="UniProtKB-KW"/>
</dbReference>
<dbReference type="GO" id="GO:0004076">
    <property type="term" value="F:biotin synthase activity"/>
    <property type="evidence" value="ECO:0000318"/>
    <property type="project" value="GO_Central"/>
</dbReference>
<dbReference type="GO" id="GO:0046872">
    <property type="term" value="F:metal ion binding"/>
    <property type="evidence" value="ECO:0007669"/>
    <property type="project" value="UniProtKB-KW"/>
</dbReference>
<dbReference type="GO" id="GO:0009102">
    <property type="term" value="P:biotin biosynthetic process"/>
    <property type="evidence" value="ECO:0000318"/>
    <property type="project" value="GO_Central"/>
</dbReference>
<dbReference type="CDD" id="cd01335">
    <property type="entry name" value="Radical_SAM"/>
    <property type="match status" value="1"/>
</dbReference>
<dbReference type="Gene3D" id="3.20.20.70">
    <property type="entry name" value="Aldolase class I"/>
    <property type="match status" value="1"/>
</dbReference>
<dbReference type="InterPro" id="IPR013785">
    <property type="entry name" value="Aldolase_TIM"/>
</dbReference>
<dbReference type="InterPro" id="IPR002684">
    <property type="entry name" value="Biotin_synth/BioAB"/>
</dbReference>
<dbReference type="InterPro" id="IPR006638">
    <property type="entry name" value="Elp3/MiaA/NifB-like_rSAM"/>
</dbReference>
<dbReference type="InterPro" id="IPR007197">
    <property type="entry name" value="rSAM"/>
</dbReference>
<dbReference type="NCBIfam" id="NF004911">
    <property type="entry name" value="PRK06267.1"/>
    <property type="match status" value="1"/>
</dbReference>
<dbReference type="PANTHER" id="PTHR22976">
    <property type="entry name" value="BIOTIN SYNTHASE"/>
    <property type="match status" value="1"/>
</dbReference>
<dbReference type="PANTHER" id="PTHR22976:SF2">
    <property type="entry name" value="BIOTIN SYNTHASE, MITOCHONDRIAL"/>
    <property type="match status" value="1"/>
</dbReference>
<dbReference type="Pfam" id="PF04055">
    <property type="entry name" value="Radical_SAM"/>
    <property type="match status" value="1"/>
</dbReference>
<dbReference type="SFLD" id="SFLDS00029">
    <property type="entry name" value="Radical_SAM"/>
    <property type="match status" value="1"/>
</dbReference>
<dbReference type="SMART" id="SM00729">
    <property type="entry name" value="Elp3"/>
    <property type="match status" value="1"/>
</dbReference>
<dbReference type="SUPFAM" id="SSF102114">
    <property type="entry name" value="Radical SAM enzymes"/>
    <property type="match status" value="1"/>
</dbReference>
<dbReference type="PROSITE" id="PS51918">
    <property type="entry name" value="RADICAL_SAM"/>
    <property type="match status" value="1"/>
</dbReference>
<protein>
    <recommendedName>
        <fullName>Uncharacterized protein MJ0597</fullName>
    </recommendedName>
</protein>
<comment type="cofactor">
    <cofactor evidence="1">
        <name>[4Fe-4S] cluster</name>
        <dbReference type="ChEBI" id="CHEBI:49883"/>
    </cofactor>
</comment>
<organism>
    <name type="scientific">Methanocaldococcus jannaschii (strain ATCC 43067 / DSM 2661 / JAL-1 / JCM 10045 / NBRC 100440)</name>
    <name type="common">Methanococcus jannaschii</name>
    <dbReference type="NCBI Taxonomy" id="243232"/>
    <lineage>
        <taxon>Archaea</taxon>
        <taxon>Methanobacteriati</taxon>
        <taxon>Methanobacteriota</taxon>
        <taxon>Methanomada group</taxon>
        <taxon>Methanococci</taxon>
        <taxon>Methanococcales</taxon>
        <taxon>Methanocaldococcaceae</taxon>
        <taxon>Methanocaldococcus</taxon>
    </lineage>
</organism>
<reference key="1">
    <citation type="journal article" date="1996" name="Science">
        <title>Complete genome sequence of the methanogenic archaeon, Methanococcus jannaschii.</title>
        <authorList>
            <person name="Bult C.J."/>
            <person name="White O."/>
            <person name="Olsen G.J."/>
            <person name="Zhou L."/>
            <person name="Fleischmann R.D."/>
            <person name="Sutton G.G."/>
            <person name="Blake J.A."/>
            <person name="FitzGerald L.M."/>
            <person name="Clayton R.A."/>
            <person name="Gocayne J.D."/>
            <person name="Kerlavage A.R."/>
            <person name="Dougherty B.A."/>
            <person name="Tomb J.-F."/>
            <person name="Adams M.D."/>
            <person name="Reich C.I."/>
            <person name="Overbeek R."/>
            <person name="Kirkness E.F."/>
            <person name="Weinstock K.G."/>
            <person name="Merrick J.M."/>
            <person name="Glodek A."/>
            <person name="Scott J.L."/>
            <person name="Geoghagen N.S.M."/>
            <person name="Weidman J.F."/>
            <person name="Fuhrmann J.L."/>
            <person name="Nguyen D."/>
            <person name="Utterback T.R."/>
            <person name="Kelley J.M."/>
            <person name="Peterson J.D."/>
            <person name="Sadow P.W."/>
            <person name="Hanna M.C."/>
            <person name="Cotton M.D."/>
            <person name="Roberts K.M."/>
            <person name="Hurst M.A."/>
            <person name="Kaine B.P."/>
            <person name="Borodovsky M."/>
            <person name="Klenk H.-P."/>
            <person name="Fraser C.M."/>
            <person name="Smith H.O."/>
            <person name="Woese C.R."/>
            <person name="Venter J.C."/>
        </authorList>
    </citation>
    <scope>NUCLEOTIDE SEQUENCE [LARGE SCALE GENOMIC DNA]</scope>
    <source>
        <strain>ATCC 43067 / DSM 2661 / JAL-1 / JCM 10045 / NBRC 100440</strain>
    </source>
</reference>
<evidence type="ECO:0000255" key="1">
    <source>
        <dbReference type="PROSITE-ProRule" id="PRU01266"/>
    </source>
</evidence>
<accession>Q58014</accession>